<name>RBFA_PSYWF</name>
<sequence length="140" mass="15930">MNQRLQRLGDQIQRELAVLIRDDVNDPRLTGFVTISSVKVSSDLGYADVYVTIMEPELNDAMSKHSHEESLKVLNKAAGFLRTELSHSLKTRTTPRLRFHYDEVTARGNYMMDLINKAVTKTEQTSADDDADRLDSEDRS</sequence>
<comment type="function">
    <text evidence="1">One of several proteins that assist in the late maturation steps of the functional core of the 30S ribosomal subunit. Associates with free 30S ribosomal subunits (but not with 30S subunits that are part of 70S ribosomes or polysomes). Required for efficient processing of 16S rRNA. May interact with the 5'-terminal helix region of 16S rRNA.</text>
</comment>
<comment type="subunit">
    <text evidence="1">Monomer. Binds 30S ribosomal subunits, but not 50S ribosomal subunits or 70S ribosomes.</text>
</comment>
<comment type="subcellular location">
    <subcellularLocation>
        <location evidence="1">Cytoplasm</location>
    </subcellularLocation>
</comment>
<comment type="similarity">
    <text evidence="1">Belongs to the RbfA family.</text>
</comment>
<protein>
    <recommendedName>
        <fullName evidence="1">Ribosome-binding factor A</fullName>
    </recommendedName>
</protein>
<evidence type="ECO:0000255" key="1">
    <source>
        <dbReference type="HAMAP-Rule" id="MF_00003"/>
    </source>
</evidence>
<evidence type="ECO:0000256" key="2">
    <source>
        <dbReference type="SAM" id="MobiDB-lite"/>
    </source>
</evidence>
<gene>
    <name evidence="1" type="primary">rbfA</name>
    <name type="ordered locus">PsycPRwf_0158</name>
</gene>
<dbReference type="EMBL" id="CP000713">
    <property type="protein sequence ID" value="ABQ93117.1"/>
    <property type="molecule type" value="Genomic_DNA"/>
</dbReference>
<dbReference type="SMR" id="A5WBS6"/>
<dbReference type="STRING" id="349106.PsycPRwf_0158"/>
<dbReference type="KEGG" id="prw:PsycPRwf_0158"/>
<dbReference type="eggNOG" id="COG0858">
    <property type="taxonomic scope" value="Bacteria"/>
</dbReference>
<dbReference type="HOGENOM" id="CLU_089475_5_0_6"/>
<dbReference type="GO" id="GO:0005829">
    <property type="term" value="C:cytosol"/>
    <property type="evidence" value="ECO:0007669"/>
    <property type="project" value="TreeGrafter"/>
</dbReference>
<dbReference type="GO" id="GO:0043024">
    <property type="term" value="F:ribosomal small subunit binding"/>
    <property type="evidence" value="ECO:0007669"/>
    <property type="project" value="TreeGrafter"/>
</dbReference>
<dbReference type="GO" id="GO:0030490">
    <property type="term" value="P:maturation of SSU-rRNA"/>
    <property type="evidence" value="ECO:0007669"/>
    <property type="project" value="UniProtKB-UniRule"/>
</dbReference>
<dbReference type="Gene3D" id="3.30.300.20">
    <property type="match status" value="1"/>
</dbReference>
<dbReference type="HAMAP" id="MF_00003">
    <property type="entry name" value="RbfA"/>
    <property type="match status" value="1"/>
</dbReference>
<dbReference type="InterPro" id="IPR015946">
    <property type="entry name" value="KH_dom-like_a/b"/>
</dbReference>
<dbReference type="InterPro" id="IPR000238">
    <property type="entry name" value="RbfA"/>
</dbReference>
<dbReference type="InterPro" id="IPR023799">
    <property type="entry name" value="RbfA_dom_sf"/>
</dbReference>
<dbReference type="NCBIfam" id="NF010389">
    <property type="entry name" value="PRK13816.1"/>
    <property type="match status" value="1"/>
</dbReference>
<dbReference type="NCBIfam" id="TIGR00082">
    <property type="entry name" value="rbfA"/>
    <property type="match status" value="1"/>
</dbReference>
<dbReference type="PANTHER" id="PTHR33515">
    <property type="entry name" value="RIBOSOME-BINDING FACTOR A, CHLOROPLASTIC-RELATED"/>
    <property type="match status" value="1"/>
</dbReference>
<dbReference type="PANTHER" id="PTHR33515:SF1">
    <property type="entry name" value="RIBOSOME-BINDING FACTOR A, CHLOROPLASTIC-RELATED"/>
    <property type="match status" value="1"/>
</dbReference>
<dbReference type="Pfam" id="PF02033">
    <property type="entry name" value="RBFA"/>
    <property type="match status" value="1"/>
</dbReference>
<dbReference type="SUPFAM" id="SSF89919">
    <property type="entry name" value="Ribosome-binding factor A, RbfA"/>
    <property type="match status" value="1"/>
</dbReference>
<reference key="1">
    <citation type="submission" date="2007-05" db="EMBL/GenBank/DDBJ databases">
        <title>Complete sequence of chromosome of Psychrobacter sp. PRwf-1.</title>
        <authorList>
            <consortium name="US DOE Joint Genome Institute"/>
            <person name="Copeland A."/>
            <person name="Lucas S."/>
            <person name="Lapidus A."/>
            <person name="Barry K."/>
            <person name="Detter J.C."/>
            <person name="Glavina del Rio T."/>
            <person name="Hammon N."/>
            <person name="Israni S."/>
            <person name="Dalin E."/>
            <person name="Tice H."/>
            <person name="Pitluck S."/>
            <person name="Chain P."/>
            <person name="Malfatti S."/>
            <person name="Shin M."/>
            <person name="Vergez L."/>
            <person name="Schmutz J."/>
            <person name="Larimer F."/>
            <person name="Land M."/>
            <person name="Hauser L."/>
            <person name="Kyrpides N."/>
            <person name="Kim E."/>
            <person name="Tiedje J."/>
            <person name="Richardson P."/>
        </authorList>
    </citation>
    <scope>NUCLEOTIDE SEQUENCE [LARGE SCALE GENOMIC DNA]</scope>
    <source>
        <strain>PRwf-1</strain>
    </source>
</reference>
<feature type="chain" id="PRO_0000321242" description="Ribosome-binding factor A">
    <location>
        <begin position="1"/>
        <end position="140"/>
    </location>
</feature>
<feature type="region of interest" description="Disordered" evidence="2">
    <location>
        <begin position="121"/>
        <end position="140"/>
    </location>
</feature>
<organism>
    <name type="scientific">Psychrobacter sp. (strain PRwf-1)</name>
    <dbReference type="NCBI Taxonomy" id="349106"/>
    <lineage>
        <taxon>Bacteria</taxon>
        <taxon>Pseudomonadati</taxon>
        <taxon>Pseudomonadota</taxon>
        <taxon>Gammaproteobacteria</taxon>
        <taxon>Moraxellales</taxon>
        <taxon>Moraxellaceae</taxon>
        <taxon>Psychrobacter</taxon>
    </lineage>
</organism>
<keyword id="KW-0963">Cytoplasm</keyword>
<keyword id="KW-0690">Ribosome biogenesis</keyword>
<proteinExistence type="inferred from homology"/>
<accession>A5WBS6</accession>